<name>OXC_ECOLI</name>
<proteinExistence type="evidence at protein level"/>
<organism>
    <name type="scientific">Escherichia coli (strain K12)</name>
    <dbReference type="NCBI Taxonomy" id="83333"/>
    <lineage>
        <taxon>Bacteria</taxon>
        <taxon>Pseudomonadati</taxon>
        <taxon>Pseudomonadota</taxon>
        <taxon>Gammaproteobacteria</taxon>
        <taxon>Enterobacterales</taxon>
        <taxon>Enterobacteriaceae</taxon>
        <taxon>Escherichia</taxon>
    </lineage>
</organism>
<gene>
    <name type="primary">oxc</name>
    <name type="synonym">yfdU</name>
    <name type="ordered locus">b2373</name>
    <name type="ordered locus">JW2370</name>
</gene>
<comment type="function">
    <text evidence="2">Involved in the catabolism of oxalate and in the adapatation to low pH via the induction of the oxalate-dependent acid tolerance response (ATR). Catalyzes the decarboxylation of oxalyl-CoA to yield carbon dioxide and formyl-CoA.</text>
</comment>
<comment type="catalytic activity">
    <reaction evidence="2">
        <text>oxalyl-CoA + H(+) = formyl-CoA + CO2</text>
        <dbReference type="Rhea" id="RHEA:19333"/>
        <dbReference type="ChEBI" id="CHEBI:15378"/>
        <dbReference type="ChEBI" id="CHEBI:16526"/>
        <dbReference type="ChEBI" id="CHEBI:57376"/>
        <dbReference type="ChEBI" id="CHEBI:57388"/>
        <dbReference type="EC" id="4.1.1.8"/>
    </reaction>
</comment>
<comment type="cofactor">
    <cofactor evidence="2">
        <name>Mg(2+)</name>
        <dbReference type="ChEBI" id="CHEBI:18420"/>
    </cofactor>
    <text evidence="2">Binds 1 Mg(2+) ion per subunit.</text>
</comment>
<comment type="cofactor">
    <cofactor evidence="2">
        <name>thiamine diphosphate</name>
        <dbReference type="ChEBI" id="CHEBI:58937"/>
    </cofactor>
    <text evidence="2">Binds 1 thiamine pyrophosphate per subunit.</text>
</comment>
<comment type="activity regulation">
    <text evidence="2">Activated by ADP.</text>
</comment>
<comment type="biophysicochemical properties">
    <kinetics>
        <KM evidence="2">3.17 uM for oxalyl-CoA (with 300 uM ADP at pH 6.5 and 30 degrees Celsius)</KM>
        <KM evidence="2">4.8 uM for oxalyl-CoA (at pH 6.5 and 30 degrees Celsius)</KM>
        <text>kcat is 69.7 sec(-1) for decarboxylase activity with oxalyl-CoA as substrate (with 300 uM ADP at pH 6.5 and 30 degrees Celsius). kcat is 60.7 sec(-1) for decarboxylase activity with oxalyl-CoA as substrate (at pH 6.5 and 30 degrees Celsius).</text>
    </kinetics>
    <phDependence>
        <text evidence="2">Optimum pH is between 5.5 and 7.</text>
    </phDependence>
</comment>
<comment type="pathway">
    <text>Metabolic intermediate degradation; oxalate degradation; CO(2) and formate from oxalate: step 2/2.</text>
</comment>
<comment type="subunit">
    <text evidence="2">Homotetramer; dimer of dimers.</text>
</comment>
<comment type="interaction">
    <interactant intactId="EBI-557143">
        <id>P0AFI0</id>
    </interactant>
    <interactant intactId="EBI-557143">
        <id>P0AFI0</id>
        <label>oxc</label>
    </interactant>
    <organismsDiffer>false</organismsDiffer>
    <experiments>4</experiments>
</comment>
<comment type="induction">
    <text evidence="3">By the acid response regulator EvgA.</text>
</comment>
<comment type="similarity">
    <text evidence="4">Belongs to the TPP enzyme family.</text>
</comment>
<dbReference type="EC" id="4.1.1.8"/>
<dbReference type="EMBL" id="U00096">
    <property type="protein sequence ID" value="AAC75432.1"/>
    <property type="molecule type" value="Genomic_DNA"/>
</dbReference>
<dbReference type="EMBL" id="AP009048">
    <property type="protein sequence ID" value="BAA16245.2"/>
    <property type="molecule type" value="Genomic_DNA"/>
</dbReference>
<dbReference type="PIR" id="B65011">
    <property type="entry name" value="B65011"/>
</dbReference>
<dbReference type="RefSeq" id="NP_416874.1">
    <property type="nucleotide sequence ID" value="NC_000913.3"/>
</dbReference>
<dbReference type="RefSeq" id="WP_001283490.1">
    <property type="nucleotide sequence ID" value="NZ_LN832404.1"/>
</dbReference>
<dbReference type="PDB" id="2Q27">
    <property type="method" value="X-ray"/>
    <property type="resolution" value="2.12 A"/>
    <property type="chains" value="A/B=1-564"/>
</dbReference>
<dbReference type="PDB" id="2Q28">
    <property type="method" value="X-ray"/>
    <property type="resolution" value="1.74 A"/>
    <property type="chains" value="A/B=1-564"/>
</dbReference>
<dbReference type="PDB" id="2Q29">
    <property type="method" value="X-ray"/>
    <property type="resolution" value="1.82 A"/>
    <property type="chains" value="A/B=1-564"/>
</dbReference>
<dbReference type="PDBsum" id="2Q27"/>
<dbReference type="PDBsum" id="2Q28"/>
<dbReference type="PDBsum" id="2Q29"/>
<dbReference type="SMR" id="P0AFI0"/>
<dbReference type="BioGRID" id="4260862">
    <property type="interactions" value="20"/>
</dbReference>
<dbReference type="BioGRID" id="851186">
    <property type="interactions" value="1"/>
</dbReference>
<dbReference type="DIP" id="DIP-48075N"/>
<dbReference type="FunCoup" id="P0AFI0">
    <property type="interactions" value="485"/>
</dbReference>
<dbReference type="IntAct" id="P0AFI0">
    <property type="interactions" value="6"/>
</dbReference>
<dbReference type="MINT" id="P0AFI0"/>
<dbReference type="STRING" id="511145.b2373"/>
<dbReference type="PaxDb" id="511145-b2373"/>
<dbReference type="EnsemblBacteria" id="AAC75432">
    <property type="protein sequence ID" value="AAC75432"/>
    <property type="gene ID" value="b2373"/>
</dbReference>
<dbReference type="GeneID" id="93774756"/>
<dbReference type="GeneID" id="946845"/>
<dbReference type="KEGG" id="ecj:JW2370"/>
<dbReference type="KEGG" id="eco:b2373"/>
<dbReference type="KEGG" id="ecoc:C3026_13195"/>
<dbReference type="PATRIC" id="fig|1411691.4.peg.4356"/>
<dbReference type="EchoBASE" id="EB3895"/>
<dbReference type="eggNOG" id="COG0028">
    <property type="taxonomic scope" value="Bacteria"/>
</dbReference>
<dbReference type="InParanoid" id="P0AFI0"/>
<dbReference type="OMA" id="QGPWIGS"/>
<dbReference type="OrthoDB" id="3194735at2"/>
<dbReference type="PhylomeDB" id="P0AFI0"/>
<dbReference type="BioCyc" id="EcoCyc:G7236-MONOMER"/>
<dbReference type="BioCyc" id="MetaCyc:G7236-MONOMER"/>
<dbReference type="BRENDA" id="4.1.1.8">
    <property type="organism ID" value="2026"/>
</dbReference>
<dbReference type="UniPathway" id="UPA00540">
    <property type="reaction ID" value="UER00599"/>
</dbReference>
<dbReference type="EvolutionaryTrace" id="P0AFI0"/>
<dbReference type="PRO" id="PR:P0AFI0"/>
<dbReference type="Proteomes" id="UP000000625">
    <property type="component" value="Chromosome"/>
</dbReference>
<dbReference type="GO" id="GO:0043531">
    <property type="term" value="F:ADP binding"/>
    <property type="evidence" value="ECO:0000314"/>
    <property type="project" value="EcoCyc"/>
</dbReference>
<dbReference type="GO" id="GO:0042802">
    <property type="term" value="F:identical protein binding"/>
    <property type="evidence" value="ECO:0000353"/>
    <property type="project" value="IntAct"/>
</dbReference>
<dbReference type="GO" id="GO:0000287">
    <property type="term" value="F:magnesium ion binding"/>
    <property type="evidence" value="ECO:0000314"/>
    <property type="project" value="UniProtKB"/>
</dbReference>
<dbReference type="GO" id="GO:0008949">
    <property type="term" value="F:oxalyl-CoA decarboxylase activity"/>
    <property type="evidence" value="ECO:0000314"/>
    <property type="project" value="EcoCyc"/>
</dbReference>
<dbReference type="GO" id="GO:0030976">
    <property type="term" value="F:thiamine pyrophosphate binding"/>
    <property type="evidence" value="ECO:0000314"/>
    <property type="project" value="EcoCyc"/>
</dbReference>
<dbReference type="GO" id="GO:0071468">
    <property type="term" value="P:cellular response to acidic pH"/>
    <property type="evidence" value="ECO:0000315"/>
    <property type="project" value="EcoCyc"/>
</dbReference>
<dbReference type="GO" id="GO:0001561">
    <property type="term" value="P:fatty acid alpha-oxidation"/>
    <property type="evidence" value="ECO:0000318"/>
    <property type="project" value="GO_Central"/>
</dbReference>
<dbReference type="GO" id="GO:0033611">
    <property type="term" value="P:oxalate catabolic process"/>
    <property type="evidence" value="ECO:0000314"/>
    <property type="project" value="UniProtKB"/>
</dbReference>
<dbReference type="CDD" id="cd02004">
    <property type="entry name" value="TPP_BZL_OCoD_HPCL"/>
    <property type="match status" value="1"/>
</dbReference>
<dbReference type="CDD" id="cd07035">
    <property type="entry name" value="TPP_PYR_POX_like"/>
    <property type="match status" value="1"/>
</dbReference>
<dbReference type="FunFam" id="3.40.50.1220:FF:000006">
    <property type="entry name" value="2-hydroxyacyl-CoA lyase 1"/>
    <property type="match status" value="1"/>
</dbReference>
<dbReference type="FunFam" id="3.40.50.970:FF:000040">
    <property type="entry name" value="Oxalyl-CoA decarboxylase"/>
    <property type="match status" value="1"/>
</dbReference>
<dbReference type="FunFam" id="3.40.50.970:FF:000042">
    <property type="entry name" value="Oxalyl-CoA decarboxylase"/>
    <property type="match status" value="1"/>
</dbReference>
<dbReference type="Gene3D" id="3.40.50.970">
    <property type="match status" value="2"/>
</dbReference>
<dbReference type="Gene3D" id="3.40.50.1220">
    <property type="entry name" value="TPP-binding domain"/>
    <property type="match status" value="1"/>
</dbReference>
<dbReference type="InterPro" id="IPR029035">
    <property type="entry name" value="DHS-like_NAD/FAD-binding_dom"/>
</dbReference>
<dbReference type="InterPro" id="IPR045025">
    <property type="entry name" value="HACL1-like"/>
</dbReference>
<dbReference type="InterPro" id="IPR017660">
    <property type="entry name" value="Oxalyl-CoA_decarboxylase"/>
</dbReference>
<dbReference type="InterPro" id="IPR029061">
    <property type="entry name" value="THDP-binding"/>
</dbReference>
<dbReference type="InterPro" id="IPR012000">
    <property type="entry name" value="Thiamin_PyroP_enz_cen_dom"/>
</dbReference>
<dbReference type="InterPro" id="IPR012001">
    <property type="entry name" value="Thiamin_PyroP_enz_TPP-bd_dom"/>
</dbReference>
<dbReference type="InterPro" id="IPR011766">
    <property type="entry name" value="TPP_enzyme_TPP-bd"/>
</dbReference>
<dbReference type="NCBIfam" id="TIGR03254">
    <property type="entry name" value="oxalate_oxc"/>
    <property type="match status" value="1"/>
</dbReference>
<dbReference type="NCBIfam" id="NF006721">
    <property type="entry name" value="PRK09259.1"/>
    <property type="match status" value="1"/>
</dbReference>
<dbReference type="PANTHER" id="PTHR43710">
    <property type="entry name" value="2-HYDROXYACYL-COA LYASE"/>
    <property type="match status" value="1"/>
</dbReference>
<dbReference type="PANTHER" id="PTHR43710:SF2">
    <property type="entry name" value="2-HYDROXYACYL-COA LYASE 1"/>
    <property type="match status" value="1"/>
</dbReference>
<dbReference type="Pfam" id="PF02775">
    <property type="entry name" value="TPP_enzyme_C"/>
    <property type="match status" value="1"/>
</dbReference>
<dbReference type="Pfam" id="PF00205">
    <property type="entry name" value="TPP_enzyme_M"/>
    <property type="match status" value="1"/>
</dbReference>
<dbReference type="Pfam" id="PF02776">
    <property type="entry name" value="TPP_enzyme_N"/>
    <property type="match status" value="1"/>
</dbReference>
<dbReference type="SUPFAM" id="SSF52467">
    <property type="entry name" value="DHS-like NAD/FAD-binding domain"/>
    <property type="match status" value="1"/>
</dbReference>
<dbReference type="SUPFAM" id="SSF52518">
    <property type="entry name" value="Thiamin diphosphate-binding fold (THDP-binding)"/>
    <property type="match status" value="2"/>
</dbReference>
<protein>
    <recommendedName>
        <fullName>Oxalyl-CoA decarboxylase</fullName>
        <ecNumber>4.1.1.8</ecNumber>
    </recommendedName>
</protein>
<sequence>MSDQLQMTDGMHIIVEALKQNNIDTIYGVVGIPVTDMARHAQAEGIRYIGFRHEQSAGYAAAASGFLTQKPGICLTVSAPGFLNGLTALANATVNGFPMIMISGSSDRAIVDLQQGDYEELDQMNAAKPYAKAAFRVNQPQDLGIALARAIRVSVSGRPGGVYLDLPANVLAATMEKDEALTTIVKVENPSPALLPCPKSVTSAISLLAKAERPLIILGKGAAYSQADEQLREFIESAQIPFLPMSMAKGILEDTHPLSAAAARSFALANADVVMLVGARLNWLLAHGKKGWAADTQFIQLDIEPQEIDSNRPIAVPVVGDIASSMQGMLAELKQNTFTTPLVWRDILNIHKQQNAQKMHEKLSTDTQPLNYFNALSAVRDVLRENQDIYLVNEGANTLDNARNIIDMYKPRRRLDCGTWGVMGIGMGYAIGASVTSGSPVVAIEGDSAFGFSGMEIETICRYNLPVTIVIFNNGGIYRGDGVDLSGAGAPSPTDLLHHARYDKLMDAFRGVGYNVTTTDELRHALTTGIQSRKPTIINVVIDPAAGTESGHITKLNPKQVAGN</sequence>
<evidence type="ECO:0000250" key="1"/>
<evidence type="ECO:0000269" key="2">
    <source>
    </source>
</evidence>
<evidence type="ECO:0000269" key="3">
    <source>
    </source>
</evidence>
<evidence type="ECO:0000305" key="4"/>
<evidence type="ECO:0007829" key="5">
    <source>
        <dbReference type="PDB" id="2Q28"/>
    </source>
</evidence>
<evidence type="ECO:0007829" key="6">
    <source>
        <dbReference type="PDB" id="2Q29"/>
    </source>
</evidence>
<accession>P0AFI0</accession>
<accession>P78093</accession>
<accession>P78194</accession>
<accession>P78195</accession>
<reference key="1">
    <citation type="journal article" date="1997" name="DNA Res.">
        <title>Construction of a contiguous 874-kb sequence of the Escherichia coli-K12 genome corresponding to 50.0-68.8 min on the linkage map and analysis of its sequence features.</title>
        <authorList>
            <person name="Yamamoto Y."/>
            <person name="Aiba H."/>
            <person name="Baba T."/>
            <person name="Hayashi K."/>
            <person name="Inada T."/>
            <person name="Isono K."/>
            <person name="Itoh T."/>
            <person name="Kimura S."/>
            <person name="Kitagawa M."/>
            <person name="Makino K."/>
            <person name="Miki T."/>
            <person name="Mitsuhashi N."/>
            <person name="Mizobuchi K."/>
            <person name="Mori H."/>
            <person name="Nakade S."/>
            <person name="Nakamura Y."/>
            <person name="Nashimoto H."/>
            <person name="Oshima T."/>
            <person name="Oyama S."/>
            <person name="Saito N."/>
            <person name="Sampei G."/>
            <person name="Satoh Y."/>
            <person name="Sivasundaram S."/>
            <person name="Tagami H."/>
            <person name="Takahashi H."/>
            <person name="Takeda J."/>
            <person name="Takemoto K."/>
            <person name="Uehara K."/>
            <person name="Wada C."/>
            <person name="Yamagata S."/>
            <person name="Horiuchi T."/>
        </authorList>
    </citation>
    <scope>NUCLEOTIDE SEQUENCE [LARGE SCALE GENOMIC DNA]</scope>
    <source>
        <strain>K12 / W3110 / ATCC 27325 / DSM 5911</strain>
    </source>
</reference>
<reference key="2">
    <citation type="journal article" date="1997" name="Science">
        <title>The complete genome sequence of Escherichia coli K-12.</title>
        <authorList>
            <person name="Blattner F.R."/>
            <person name="Plunkett G. III"/>
            <person name="Bloch C.A."/>
            <person name="Perna N.T."/>
            <person name="Burland V."/>
            <person name="Riley M."/>
            <person name="Collado-Vides J."/>
            <person name="Glasner J.D."/>
            <person name="Rode C.K."/>
            <person name="Mayhew G.F."/>
            <person name="Gregor J."/>
            <person name="Davis N.W."/>
            <person name="Kirkpatrick H.A."/>
            <person name="Goeden M.A."/>
            <person name="Rose D.J."/>
            <person name="Mau B."/>
            <person name="Shao Y."/>
        </authorList>
    </citation>
    <scope>NUCLEOTIDE SEQUENCE [LARGE SCALE GENOMIC DNA]</scope>
    <source>
        <strain>K12 / MG1655 / ATCC 47076</strain>
    </source>
</reference>
<reference key="3">
    <citation type="journal article" date="2006" name="Mol. Syst. Biol.">
        <title>Highly accurate genome sequences of Escherichia coli K-12 strains MG1655 and W3110.</title>
        <authorList>
            <person name="Hayashi K."/>
            <person name="Morooka N."/>
            <person name="Yamamoto Y."/>
            <person name="Fujita K."/>
            <person name="Isono K."/>
            <person name="Choi S."/>
            <person name="Ohtsubo E."/>
            <person name="Baba T."/>
            <person name="Wanner B.L."/>
            <person name="Mori H."/>
            <person name="Horiuchi T."/>
        </authorList>
    </citation>
    <scope>NUCLEOTIDE SEQUENCE [LARGE SCALE GENOMIC DNA]</scope>
    <source>
        <strain>K12 / W3110 / ATCC 27325 / DSM 5911</strain>
    </source>
</reference>
<reference key="4">
    <citation type="journal article" date="2013" name="J. Bacteriol.">
        <title>YfdW and YfdU are required for oxalate-induced acid tolerance in Escherichia coli K-12.</title>
        <authorList>
            <person name="Fontenot E.M."/>
            <person name="Ezelle K.E."/>
            <person name="Gabreski L.N."/>
            <person name="Giglio E.R."/>
            <person name="McAfee J.M."/>
            <person name="Mills A.C."/>
            <person name="Qureshi M.N."/>
            <person name="Salmon K.M."/>
            <person name="Toyota C.G."/>
        </authorList>
    </citation>
    <scope>INDUCTION</scope>
</reference>
<reference key="5">
    <citation type="journal article" date="2010" name="FEBS J.">
        <title>New insights into structure-function relationships of oxalyl CoA decarboxylase from Escherichia coli.</title>
        <authorList>
            <person name="Werther T."/>
            <person name="Zimmer A."/>
            <person name="Wille G."/>
            <person name="Golbik R."/>
            <person name="Weiss M.S."/>
            <person name="Konig S."/>
        </authorList>
    </citation>
    <scope>X-RAY CRYSTALLOGRAPHY (1.74 ANGSTROMS) IN COMPLEX WITH THIAMINE PYROPHOSPHATE; SUBSTRATE ANALOGS; ADP AND MAGNESIUM</scope>
    <scope>FUNCTION</scope>
    <scope>CATALYTIC ACTIVITY</scope>
    <scope>BIOPHYSICOCHEMICAL PROPERTIES</scope>
    <scope>ACTIVITY REGULATION</scope>
    <scope>COFACTOR</scope>
    <scope>SUBUNIT</scope>
</reference>
<feature type="chain" id="PRO_0000090824" description="Oxalyl-CoA decarboxylase">
    <location>
        <begin position="1"/>
        <end position="564"/>
    </location>
</feature>
<feature type="binding site" evidence="1">
    <location>
        <position position="32"/>
    </location>
    <ligand>
        <name>substrate</name>
    </ligand>
</feature>
<feature type="binding site" evidence="1">
    <location>
        <position position="118"/>
    </location>
    <ligand>
        <name>substrate</name>
    </ligand>
</feature>
<feature type="binding site" evidence="2">
    <location>
        <position position="158"/>
    </location>
    <ligand>
        <name>ADP</name>
        <dbReference type="ChEBI" id="CHEBI:456216"/>
    </ligand>
</feature>
<feature type="binding site" evidence="2">
    <location>
        <position position="220"/>
    </location>
    <ligand>
        <name>ADP</name>
        <dbReference type="ChEBI" id="CHEBI:456216"/>
    </ligand>
</feature>
<feature type="binding site" evidence="4">
    <location>
        <begin position="261"/>
        <end position="265"/>
    </location>
    <ligand>
        <name>substrate</name>
    </ligand>
</feature>
<feature type="binding site" evidence="2">
    <location>
        <position position="280"/>
    </location>
    <ligand>
        <name>ADP</name>
        <dbReference type="ChEBI" id="CHEBI:456216"/>
    </ligand>
</feature>
<feature type="binding site" evidence="2">
    <location>
        <position position="302"/>
    </location>
    <ligand>
        <name>ADP</name>
        <dbReference type="ChEBI" id="CHEBI:456216"/>
    </ligand>
</feature>
<feature type="binding site" evidence="2">
    <location>
        <position position="322"/>
    </location>
    <ligand>
        <name>ADP</name>
        <dbReference type="ChEBI" id="CHEBI:456216"/>
    </ligand>
</feature>
<feature type="binding site">
    <location>
        <position position="355"/>
    </location>
    <ligand>
        <name>substrate</name>
    </ligand>
</feature>
<feature type="binding site" evidence="2">
    <location>
        <position position="372"/>
    </location>
    <ligand>
        <name>thiamine diphosphate</name>
        <dbReference type="ChEBI" id="CHEBI:58937"/>
    </ligand>
</feature>
<feature type="binding site">
    <location>
        <begin position="396"/>
        <end position="398"/>
    </location>
    <ligand>
        <name>thiamine diphosphate</name>
        <dbReference type="ChEBI" id="CHEBI:58937"/>
    </ligand>
</feature>
<feature type="binding site">
    <location>
        <begin position="403"/>
        <end position="404"/>
    </location>
    <ligand>
        <name>substrate</name>
    </ligand>
</feature>
<feature type="binding site">
    <location>
        <begin position="421"/>
        <end position="423"/>
    </location>
    <ligand>
        <name>thiamine diphosphate</name>
        <dbReference type="ChEBI" id="CHEBI:58937"/>
    </ligand>
</feature>
<feature type="binding site" evidence="2">
    <location>
        <position position="447"/>
    </location>
    <ligand>
        <name>Mg(2+)</name>
        <dbReference type="ChEBI" id="CHEBI:18420"/>
    </ligand>
</feature>
<feature type="binding site">
    <location>
        <begin position="448"/>
        <end position="449"/>
    </location>
    <ligand>
        <name>thiamine diphosphate</name>
        <dbReference type="ChEBI" id="CHEBI:58937"/>
    </ligand>
</feature>
<feature type="binding site" evidence="2">
    <location>
        <position position="474"/>
    </location>
    <ligand>
        <name>Mg(2+)</name>
        <dbReference type="ChEBI" id="CHEBI:18420"/>
    </ligand>
</feature>
<feature type="binding site" evidence="2">
    <location>
        <position position="476"/>
    </location>
    <ligand>
        <name>Mg(2+)</name>
        <dbReference type="ChEBI" id="CHEBI:18420"/>
    </ligand>
</feature>
<feature type="binding site" evidence="2">
    <location>
        <position position="478"/>
    </location>
    <ligand>
        <name>thiamine diphosphate</name>
        <dbReference type="ChEBI" id="CHEBI:58937"/>
    </ligand>
</feature>
<feature type="binding site" evidence="1">
    <location>
        <begin position="550"/>
        <end position="552"/>
    </location>
    <ligand>
        <name>substrate</name>
    </ligand>
</feature>
<feature type="strand" evidence="5">
    <location>
        <begin position="7"/>
        <end position="9"/>
    </location>
</feature>
<feature type="helix" evidence="5">
    <location>
        <begin position="10"/>
        <end position="20"/>
    </location>
</feature>
<feature type="strand" evidence="5">
    <location>
        <begin position="25"/>
        <end position="28"/>
    </location>
</feature>
<feature type="turn" evidence="5">
    <location>
        <begin position="32"/>
        <end position="34"/>
    </location>
</feature>
<feature type="helix" evidence="5">
    <location>
        <begin position="35"/>
        <end position="43"/>
    </location>
</feature>
<feature type="strand" evidence="5">
    <location>
        <begin position="47"/>
        <end position="50"/>
    </location>
</feature>
<feature type="helix" evidence="5">
    <location>
        <begin position="54"/>
        <end position="68"/>
    </location>
</feature>
<feature type="strand" evidence="5">
    <location>
        <begin position="72"/>
        <end position="76"/>
    </location>
</feature>
<feature type="helix" evidence="5">
    <location>
        <begin position="79"/>
        <end position="95"/>
    </location>
</feature>
<feature type="strand" evidence="5">
    <location>
        <begin position="99"/>
        <end position="105"/>
    </location>
</feature>
<feature type="helix" evidence="5">
    <location>
        <begin position="108"/>
        <end position="112"/>
    </location>
</feature>
<feature type="helix" evidence="5">
    <location>
        <begin position="123"/>
        <end position="127"/>
    </location>
</feature>
<feature type="helix" evidence="5">
    <location>
        <begin position="128"/>
        <end position="130"/>
    </location>
</feature>
<feature type="strand" evidence="5">
    <location>
        <begin position="131"/>
        <end position="136"/>
    </location>
</feature>
<feature type="helix" evidence="5">
    <location>
        <begin position="140"/>
        <end position="142"/>
    </location>
</feature>
<feature type="helix" evidence="5">
    <location>
        <begin position="143"/>
        <end position="155"/>
    </location>
</feature>
<feature type="strand" evidence="5">
    <location>
        <begin position="156"/>
        <end position="158"/>
    </location>
</feature>
<feature type="strand" evidence="5">
    <location>
        <begin position="161"/>
        <end position="167"/>
    </location>
</feature>
<feature type="helix" evidence="5">
    <location>
        <begin position="168"/>
        <end position="172"/>
    </location>
</feature>
<feature type="strand" evidence="5">
    <location>
        <begin position="174"/>
        <end position="176"/>
    </location>
</feature>
<feature type="helix" evidence="5">
    <location>
        <begin position="177"/>
        <end position="182"/>
    </location>
</feature>
<feature type="strand" evidence="6">
    <location>
        <begin position="188"/>
        <end position="191"/>
    </location>
</feature>
<feature type="strand" evidence="5">
    <location>
        <begin position="194"/>
        <end position="196"/>
    </location>
</feature>
<feature type="helix" evidence="5">
    <location>
        <begin position="198"/>
        <end position="210"/>
    </location>
</feature>
<feature type="strand" evidence="5">
    <location>
        <begin position="212"/>
        <end position="218"/>
    </location>
</feature>
<feature type="helix" evidence="5">
    <location>
        <begin position="220"/>
        <end position="225"/>
    </location>
</feature>
<feature type="helix" evidence="5">
    <location>
        <begin position="228"/>
        <end position="238"/>
    </location>
</feature>
<feature type="strand" evidence="5">
    <location>
        <begin position="242"/>
        <end position="244"/>
    </location>
</feature>
<feature type="helix" evidence="5">
    <location>
        <begin position="246"/>
        <end position="248"/>
    </location>
</feature>
<feature type="helix" evidence="5">
    <location>
        <begin position="261"/>
        <end position="263"/>
    </location>
</feature>
<feature type="helix" evidence="5">
    <location>
        <begin position="264"/>
        <end position="270"/>
    </location>
</feature>
<feature type="strand" evidence="5">
    <location>
        <begin position="272"/>
        <end position="278"/>
    </location>
</feature>
<feature type="helix" evidence="5">
    <location>
        <begin position="283"/>
        <end position="288"/>
    </location>
</feature>
<feature type="turn" evidence="5">
    <location>
        <begin position="289"/>
        <end position="291"/>
    </location>
</feature>
<feature type="strand" evidence="5">
    <location>
        <begin position="297"/>
        <end position="303"/>
    </location>
</feature>
<feature type="helix" evidence="5">
    <location>
        <begin position="305"/>
        <end position="307"/>
    </location>
</feature>
<feature type="strand" evidence="5">
    <location>
        <begin position="310"/>
        <end position="312"/>
    </location>
</feature>
<feature type="strand" evidence="5">
    <location>
        <begin position="315"/>
        <end position="320"/>
    </location>
</feature>
<feature type="helix" evidence="5">
    <location>
        <begin position="322"/>
        <end position="335"/>
    </location>
</feature>
<feature type="helix" evidence="5">
    <location>
        <begin position="342"/>
        <end position="363"/>
    </location>
</feature>
<feature type="strand" evidence="5">
    <location>
        <begin position="368"/>
        <end position="370"/>
    </location>
</feature>
<feature type="helix" evidence="5">
    <location>
        <begin position="372"/>
        <end position="383"/>
    </location>
</feature>
<feature type="strand" evidence="5">
    <location>
        <begin position="390"/>
        <end position="396"/>
    </location>
</feature>
<feature type="helix" evidence="5">
    <location>
        <begin position="397"/>
        <end position="405"/>
    </location>
</feature>
<feature type="strand" evidence="5">
    <location>
        <begin position="410"/>
        <end position="412"/>
    </location>
</feature>
<feature type="strand" evidence="5">
    <location>
        <begin position="414"/>
        <end position="417"/>
    </location>
</feature>
<feature type="turn" evidence="5">
    <location>
        <begin position="418"/>
        <end position="421"/>
    </location>
</feature>
<feature type="helix" evidence="5">
    <location>
        <begin position="426"/>
        <end position="437"/>
    </location>
</feature>
<feature type="strand" evidence="5">
    <location>
        <begin position="441"/>
        <end position="446"/>
    </location>
</feature>
<feature type="helix" evidence="5">
    <location>
        <begin position="447"/>
        <end position="451"/>
    </location>
</feature>
<feature type="helix" evidence="5">
    <location>
        <begin position="454"/>
        <end position="456"/>
    </location>
</feature>
<feature type="helix" evidence="5">
    <location>
        <begin position="457"/>
        <end position="462"/>
    </location>
</feature>
<feature type="strand" evidence="5">
    <location>
        <begin position="467"/>
        <end position="473"/>
    </location>
</feature>
<feature type="strand" evidence="5">
    <location>
        <begin position="475"/>
        <end position="478"/>
    </location>
</feature>
<feature type="helix" evidence="5">
    <location>
        <begin position="502"/>
        <end position="509"/>
    </location>
</feature>
<feature type="strand" evidence="5">
    <location>
        <begin position="512"/>
        <end position="516"/>
    </location>
</feature>
<feature type="helix" evidence="5">
    <location>
        <begin position="519"/>
        <end position="532"/>
    </location>
</feature>
<feature type="strand" evidence="5">
    <location>
        <begin position="536"/>
        <end position="542"/>
    </location>
</feature>
<keyword id="KW-0002">3D-structure</keyword>
<keyword id="KW-0210">Decarboxylase</keyword>
<keyword id="KW-0456">Lyase</keyword>
<keyword id="KW-0460">Magnesium</keyword>
<keyword id="KW-0479">Metal-binding</keyword>
<keyword id="KW-0547">Nucleotide-binding</keyword>
<keyword id="KW-1185">Reference proteome</keyword>
<keyword id="KW-0786">Thiamine pyrophosphate</keyword>